<proteinExistence type="inferred from homology"/>
<dbReference type="EC" id="1.2.1.70" evidence="1"/>
<dbReference type="EMBL" id="AE014075">
    <property type="protein sequence ID" value="AAN80133.1"/>
    <property type="status" value="ALT_INIT"/>
    <property type="molecule type" value="Genomic_DNA"/>
</dbReference>
<dbReference type="RefSeq" id="WP_000173201.1">
    <property type="nucleotide sequence ID" value="NZ_CP051263.1"/>
</dbReference>
<dbReference type="SMR" id="Q8FI03"/>
<dbReference type="STRING" id="199310.c1668"/>
<dbReference type="DNASU" id="1035446"/>
<dbReference type="KEGG" id="ecc:c1668"/>
<dbReference type="eggNOG" id="COG0373">
    <property type="taxonomic scope" value="Bacteria"/>
</dbReference>
<dbReference type="HOGENOM" id="CLU_035113_2_2_6"/>
<dbReference type="UniPathway" id="UPA00251">
    <property type="reaction ID" value="UER00316"/>
</dbReference>
<dbReference type="Proteomes" id="UP000001410">
    <property type="component" value="Chromosome"/>
</dbReference>
<dbReference type="GO" id="GO:0008883">
    <property type="term" value="F:glutamyl-tRNA reductase activity"/>
    <property type="evidence" value="ECO:0007669"/>
    <property type="project" value="UniProtKB-UniRule"/>
</dbReference>
<dbReference type="GO" id="GO:0050661">
    <property type="term" value="F:NADP binding"/>
    <property type="evidence" value="ECO:0007669"/>
    <property type="project" value="InterPro"/>
</dbReference>
<dbReference type="GO" id="GO:0019353">
    <property type="term" value="P:protoporphyrinogen IX biosynthetic process from glutamate"/>
    <property type="evidence" value="ECO:0007669"/>
    <property type="project" value="TreeGrafter"/>
</dbReference>
<dbReference type="CDD" id="cd05213">
    <property type="entry name" value="NAD_bind_Glutamyl_tRNA_reduct"/>
    <property type="match status" value="1"/>
</dbReference>
<dbReference type="FunFam" id="3.30.460.30:FF:000001">
    <property type="entry name" value="Glutamyl-tRNA reductase"/>
    <property type="match status" value="1"/>
</dbReference>
<dbReference type="FunFam" id="3.40.50.720:FF:000031">
    <property type="entry name" value="Glutamyl-tRNA reductase"/>
    <property type="match status" value="1"/>
</dbReference>
<dbReference type="Gene3D" id="3.30.460.30">
    <property type="entry name" value="Glutamyl-tRNA reductase, N-terminal domain"/>
    <property type="match status" value="1"/>
</dbReference>
<dbReference type="Gene3D" id="3.40.50.720">
    <property type="entry name" value="NAD(P)-binding Rossmann-like Domain"/>
    <property type="match status" value="1"/>
</dbReference>
<dbReference type="HAMAP" id="MF_00087">
    <property type="entry name" value="Glu_tRNA_reductase"/>
    <property type="match status" value="1"/>
</dbReference>
<dbReference type="InterPro" id="IPR000343">
    <property type="entry name" value="4pyrrol_synth_GluRdtase"/>
</dbReference>
<dbReference type="InterPro" id="IPR015896">
    <property type="entry name" value="4pyrrol_synth_GluRdtase_dimer"/>
</dbReference>
<dbReference type="InterPro" id="IPR015895">
    <property type="entry name" value="4pyrrol_synth_GluRdtase_N"/>
</dbReference>
<dbReference type="InterPro" id="IPR018214">
    <property type="entry name" value="GluRdtase_CS"/>
</dbReference>
<dbReference type="InterPro" id="IPR036453">
    <property type="entry name" value="GluRdtase_dimer_dom_sf"/>
</dbReference>
<dbReference type="InterPro" id="IPR036343">
    <property type="entry name" value="GluRdtase_N_sf"/>
</dbReference>
<dbReference type="InterPro" id="IPR036291">
    <property type="entry name" value="NAD(P)-bd_dom_sf"/>
</dbReference>
<dbReference type="InterPro" id="IPR006151">
    <property type="entry name" value="Shikm_DH/Glu-tRNA_Rdtase"/>
</dbReference>
<dbReference type="NCBIfam" id="TIGR01035">
    <property type="entry name" value="hemA"/>
    <property type="match status" value="1"/>
</dbReference>
<dbReference type="PANTHER" id="PTHR43013">
    <property type="entry name" value="GLUTAMYL-TRNA REDUCTASE"/>
    <property type="match status" value="1"/>
</dbReference>
<dbReference type="PANTHER" id="PTHR43013:SF1">
    <property type="entry name" value="GLUTAMYL-TRNA REDUCTASE"/>
    <property type="match status" value="1"/>
</dbReference>
<dbReference type="Pfam" id="PF00745">
    <property type="entry name" value="GlutR_dimer"/>
    <property type="match status" value="1"/>
</dbReference>
<dbReference type="Pfam" id="PF05201">
    <property type="entry name" value="GlutR_N"/>
    <property type="match status" value="1"/>
</dbReference>
<dbReference type="Pfam" id="PF01488">
    <property type="entry name" value="Shikimate_DH"/>
    <property type="match status" value="1"/>
</dbReference>
<dbReference type="PIRSF" id="PIRSF000445">
    <property type="entry name" value="4pyrrol_synth_GluRdtase"/>
    <property type="match status" value="1"/>
</dbReference>
<dbReference type="SUPFAM" id="SSF69742">
    <property type="entry name" value="Glutamyl tRNA-reductase catalytic, N-terminal domain"/>
    <property type="match status" value="1"/>
</dbReference>
<dbReference type="SUPFAM" id="SSF69075">
    <property type="entry name" value="Glutamyl tRNA-reductase dimerization domain"/>
    <property type="match status" value="1"/>
</dbReference>
<dbReference type="SUPFAM" id="SSF51735">
    <property type="entry name" value="NAD(P)-binding Rossmann-fold domains"/>
    <property type="match status" value="1"/>
</dbReference>
<dbReference type="PROSITE" id="PS00747">
    <property type="entry name" value="GLUTR"/>
    <property type="match status" value="1"/>
</dbReference>
<comment type="function">
    <text evidence="1">Catalyzes the NADPH-dependent reduction of glutamyl-tRNA(Glu) to glutamate 1-semialdehyde (GSA).</text>
</comment>
<comment type="catalytic activity">
    <reaction evidence="1">
        <text>(S)-4-amino-5-oxopentanoate + tRNA(Glu) + NADP(+) = L-glutamyl-tRNA(Glu) + NADPH + H(+)</text>
        <dbReference type="Rhea" id="RHEA:12344"/>
        <dbReference type="Rhea" id="RHEA-COMP:9663"/>
        <dbReference type="Rhea" id="RHEA-COMP:9680"/>
        <dbReference type="ChEBI" id="CHEBI:15378"/>
        <dbReference type="ChEBI" id="CHEBI:57501"/>
        <dbReference type="ChEBI" id="CHEBI:57783"/>
        <dbReference type="ChEBI" id="CHEBI:58349"/>
        <dbReference type="ChEBI" id="CHEBI:78442"/>
        <dbReference type="ChEBI" id="CHEBI:78520"/>
        <dbReference type="EC" id="1.2.1.70"/>
    </reaction>
</comment>
<comment type="pathway">
    <text evidence="1">Porphyrin-containing compound metabolism; protoporphyrin-IX biosynthesis; 5-aminolevulinate from L-glutamyl-tRNA(Glu): step 1/2.</text>
</comment>
<comment type="subunit">
    <text evidence="1">Homodimer.</text>
</comment>
<comment type="domain">
    <text evidence="1">Possesses an unusual extended V-shaped dimeric structure with each monomer consisting of three distinct domains arranged along a curved 'spinal' alpha-helix. The N-terminal catalytic domain specifically recognizes the glutamate moiety of the substrate. The second domain is the NADPH-binding domain, and the third C-terminal domain is responsible for dimerization.</text>
</comment>
<comment type="miscellaneous">
    <text evidence="1">During catalysis, the active site Cys acts as a nucleophile attacking the alpha-carbonyl group of tRNA-bound glutamate with the formation of a thioester intermediate between enzyme and glutamate, and the concomitant release of tRNA(Glu). The thioester intermediate is finally reduced by direct hydride transfer from NADPH, to form the product GSA.</text>
</comment>
<comment type="similarity">
    <text evidence="1">Belongs to the glutamyl-tRNA reductase family.</text>
</comment>
<comment type="sequence caution" evidence="2">
    <conflict type="erroneous initiation">
        <sequence resource="EMBL-CDS" id="AAN80133"/>
    </conflict>
</comment>
<evidence type="ECO:0000255" key="1">
    <source>
        <dbReference type="HAMAP-Rule" id="MF_00087"/>
    </source>
</evidence>
<evidence type="ECO:0000305" key="2"/>
<gene>
    <name evidence="1" type="primary">hemA</name>
    <name type="ordered locus">c1668</name>
</gene>
<organism>
    <name type="scientific">Escherichia coli O6:H1 (strain CFT073 / ATCC 700928 / UPEC)</name>
    <dbReference type="NCBI Taxonomy" id="199310"/>
    <lineage>
        <taxon>Bacteria</taxon>
        <taxon>Pseudomonadati</taxon>
        <taxon>Pseudomonadota</taxon>
        <taxon>Gammaproteobacteria</taxon>
        <taxon>Enterobacterales</taxon>
        <taxon>Enterobacteriaceae</taxon>
        <taxon>Escherichia</taxon>
    </lineage>
</organism>
<reference key="1">
    <citation type="journal article" date="2002" name="Proc. Natl. Acad. Sci. U.S.A.">
        <title>Extensive mosaic structure revealed by the complete genome sequence of uropathogenic Escherichia coli.</title>
        <authorList>
            <person name="Welch R.A."/>
            <person name="Burland V."/>
            <person name="Plunkett G. III"/>
            <person name="Redford P."/>
            <person name="Roesch P."/>
            <person name="Rasko D."/>
            <person name="Buckles E.L."/>
            <person name="Liou S.-R."/>
            <person name="Boutin A."/>
            <person name="Hackett J."/>
            <person name="Stroud D."/>
            <person name="Mayhew G.F."/>
            <person name="Rose D.J."/>
            <person name="Zhou S."/>
            <person name="Schwartz D.C."/>
            <person name="Perna N.T."/>
            <person name="Mobley H.L.T."/>
            <person name="Donnenberg M.S."/>
            <person name="Blattner F.R."/>
        </authorList>
    </citation>
    <scope>NUCLEOTIDE SEQUENCE [LARGE SCALE GENOMIC DNA]</scope>
    <source>
        <strain>CFT073 / ATCC 700928 / UPEC</strain>
    </source>
</reference>
<protein>
    <recommendedName>
        <fullName evidence="1">Glutamyl-tRNA reductase</fullName>
        <shortName evidence="1">GluTR</shortName>
        <ecNumber evidence="1">1.2.1.70</ecNumber>
    </recommendedName>
</protein>
<keyword id="KW-0521">NADP</keyword>
<keyword id="KW-0560">Oxidoreductase</keyword>
<keyword id="KW-0627">Porphyrin biosynthesis</keyword>
<keyword id="KW-1185">Reference proteome</keyword>
<accession>Q8FI03</accession>
<feature type="chain" id="PRO_0000114025" description="Glutamyl-tRNA reductase">
    <location>
        <begin position="1"/>
        <end position="418"/>
    </location>
</feature>
<feature type="active site" description="Nucleophile" evidence="1">
    <location>
        <position position="50"/>
    </location>
</feature>
<feature type="binding site" evidence="1">
    <location>
        <begin position="49"/>
        <end position="52"/>
    </location>
    <ligand>
        <name>substrate</name>
    </ligand>
</feature>
<feature type="binding site" evidence="1">
    <location>
        <position position="109"/>
    </location>
    <ligand>
        <name>substrate</name>
    </ligand>
</feature>
<feature type="binding site" evidence="1">
    <location>
        <begin position="114"/>
        <end position="116"/>
    </location>
    <ligand>
        <name>substrate</name>
    </ligand>
</feature>
<feature type="binding site" evidence="1">
    <location>
        <position position="120"/>
    </location>
    <ligand>
        <name>substrate</name>
    </ligand>
</feature>
<feature type="binding site" evidence="1">
    <location>
        <begin position="189"/>
        <end position="194"/>
    </location>
    <ligand>
        <name>NADP(+)</name>
        <dbReference type="ChEBI" id="CHEBI:58349"/>
    </ligand>
</feature>
<feature type="site" description="Important for activity" evidence="1">
    <location>
        <position position="99"/>
    </location>
</feature>
<sequence length="418" mass="46294">MTLLALGINHKTAPVSLRERVSFSPDKLDQALDSLLAQPMVQGGVVLSTCNRTELYLSVEERDDLQEALIRWLCDYHNLNEDDLRNSLYWHQDNDAVSHLMRVASGLDSLVLGEPQILGQVKKAFADSQKGHMKASELERMFQKSFSVAKRVRTETDIGASAVSVAFAACTLARQIFESLSTVTVLLVGAGETIELVARHLREHKVQKMIIANRTRERAQILADEVGAEVIALSDIDERLREADIIISSTASPLPIIGKGMVERALKSRRNQPMLLVDIAVPRDVEPEVGKLANAYLYSVDDLQSIISHNLAQRKAAAVEAETIVAQEASEFMAWLRAQSASETIRDYRSQAEQVRDELTAKALAALEQGGDAQTIMQDLAWKLTNRLIHAPTKSLQQAARDGDNERLNILRDSLGLE</sequence>
<name>HEM1_ECOL6</name>